<sequence length="602" mass="66767">MALSFFSGGGSASYAKYFDIRLDEGYIVFRGGEQEAASAQLSGKLLLCLSEPLAAKHVRLNLTGISRVCWHLPSGSASGSRKSWREKVFYEKTWTFRDAGKSKTEVLAAGNYEFPFHVILEGSMPESVEGLSDTYVTYRFKAEIGRKYAKDIVVRKPLRIIRTLESSALELSHAMSVENIWPNKIEYSISTPTKAVIFGTSLRVDFKLIPLLKGLKIGQIVSQLIESHDLTLNPEDPDSIRNTYKSTRTIVSDEYELDDEGSLEIIDEEAEGYQFSRYLDLPKTLTRCLQDTDTRGIKIRHKLKFRVQLLNPDGHISELRATLPVSIFISPNLAIDENNNLVDQTPQTARRAVDDIAQQAPPLYGEHQFDQLYSEVDPSGYRTPGPGSGPGTPFGALSRNISSENLASMNALTSTDLSVSALQTRLSNLHASRFSNPSPTEIDNHADSEQRRLGISTADYFGPSSGSNSHSPASPELSRRPSDEGYRDHDHIPSGMATPFHPQYAEVETLSRVPSYSTAMRSTVRPCDSELPDYQAVVAEDTAMPALQSPQQAYIRSAGRGTSMNTGIDVHQLRSGHFSSRTSNSHDEEDRRLRLVQARARV</sequence>
<proteinExistence type="inferred from homology"/>
<organism>
    <name type="scientific">Aspergillus clavatus (strain ATCC 1007 / CBS 513.65 / DSM 816 / NCTC 3887 / NRRL 1 / QM 1276 / 107)</name>
    <dbReference type="NCBI Taxonomy" id="344612"/>
    <lineage>
        <taxon>Eukaryota</taxon>
        <taxon>Fungi</taxon>
        <taxon>Dikarya</taxon>
        <taxon>Ascomycota</taxon>
        <taxon>Pezizomycotina</taxon>
        <taxon>Eurotiomycetes</taxon>
        <taxon>Eurotiomycetidae</taxon>
        <taxon>Eurotiales</taxon>
        <taxon>Aspergillaceae</taxon>
        <taxon>Aspergillus</taxon>
        <taxon>Aspergillus subgen. Fumigati</taxon>
    </lineage>
</organism>
<protein>
    <recommendedName>
        <fullName>Probable HECT-type ubiquitin ligase-interacting protein creD</fullName>
    </recommendedName>
    <alternativeName>
        <fullName>Carbon catabolite repressor D</fullName>
    </alternativeName>
</protein>
<feature type="chain" id="PRO_0000395695" description="Probable HECT-type ubiquitin ligase-interacting protein creD">
    <location>
        <begin position="1"/>
        <end position="602"/>
    </location>
</feature>
<feature type="region of interest" description="Disordered" evidence="2">
    <location>
        <begin position="375"/>
        <end position="398"/>
    </location>
</feature>
<feature type="region of interest" description="Disordered" evidence="2">
    <location>
        <begin position="457"/>
        <end position="499"/>
    </location>
</feature>
<feature type="compositionally biased region" description="Low complexity" evidence="2">
    <location>
        <begin position="463"/>
        <end position="475"/>
    </location>
</feature>
<feature type="compositionally biased region" description="Basic and acidic residues" evidence="2">
    <location>
        <begin position="477"/>
        <end position="492"/>
    </location>
</feature>
<dbReference type="EMBL" id="DS027060">
    <property type="protein sequence ID" value="EAW06591.1"/>
    <property type="status" value="ALT_SEQ"/>
    <property type="molecule type" value="Genomic_DNA"/>
</dbReference>
<dbReference type="RefSeq" id="XP_001268017.1">
    <property type="nucleotide sequence ID" value="XM_001268016.1"/>
</dbReference>
<dbReference type="SMR" id="A1CTF4"/>
<dbReference type="STRING" id="344612.A1CTF4"/>
<dbReference type="GeneID" id="4699988"/>
<dbReference type="KEGG" id="act:ACLA_082820"/>
<dbReference type="eggNOG" id="KOG3780">
    <property type="taxonomic scope" value="Eukaryota"/>
</dbReference>
<dbReference type="OrthoDB" id="2333384at2759"/>
<dbReference type="Proteomes" id="UP000006701">
    <property type="component" value="Unassembled WGS sequence"/>
</dbReference>
<dbReference type="GO" id="GO:0005829">
    <property type="term" value="C:cytosol"/>
    <property type="evidence" value="ECO:0007669"/>
    <property type="project" value="TreeGrafter"/>
</dbReference>
<dbReference type="GO" id="GO:0005886">
    <property type="term" value="C:plasma membrane"/>
    <property type="evidence" value="ECO:0007669"/>
    <property type="project" value="TreeGrafter"/>
</dbReference>
<dbReference type="GO" id="GO:0030674">
    <property type="term" value="F:protein-macromolecule adaptor activity"/>
    <property type="evidence" value="ECO:0007669"/>
    <property type="project" value="TreeGrafter"/>
</dbReference>
<dbReference type="GO" id="GO:0031625">
    <property type="term" value="F:ubiquitin protein ligase binding"/>
    <property type="evidence" value="ECO:0007669"/>
    <property type="project" value="TreeGrafter"/>
</dbReference>
<dbReference type="GO" id="GO:0031396">
    <property type="term" value="P:regulation of protein ubiquitination"/>
    <property type="evidence" value="ECO:0000250"/>
    <property type="project" value="UniProtKB"/>
</dbReference>
<dbReference type="GO" id="GO:0070086">
    <property type="term" value="P:ubiquitin-dependent endocytosis"/>
    <property type="evidence" value="ECO:0007669"/>
    <property type="project" value="TreeGrafter"/>
</dbReference>
<dbReference type="FunFam" id="2.60.40.640:FF:000018">
    <property type="entry name" value="HECT-type ubiquitin ligase-interacting protein creD"/>
    <property type="match status" value="1"/>
</dbReference>
<dbReference type="Gene3D" id="2.60.40.640">
    <property type="match status" value="1"/>
</dbReference>
<dbReference type="InterPro" id="IPR014752">
    <property type="entry name" value="Arrestin-like_C"/>
</dbReference>
<dbReference type="InterPro" id="IPR011021">
    <property type="entry name" value="Arrestin-like_N"/>
</dbReference>
<dbReference type="InterPro" id="IPR011022">
    <property type="entry name" value="Arrestin_C-like"/>
</dbReference>
<dbReference type="InterPro" id="IPR050357">
    <property type="entry name" value="Arrestin_domain-protein"/>
</dbReference>
<dbReference type="InterPro" id="IPR014756">
    <property type="entry name" value="Ig_E-set"/>
</dbReference>
<dbReference type="PANTHER" id="PTHR11188">
    <property type="entry name" value="ARRESTIN DOMAIN CONTAINING PROTEIN"/>
    <property type="match status" value="1"/>
</dbReference>
<dbReference type="PANTHER" id="PTHR11188:SF17">
    <property type="entry name" value="FI21816P1"/>
    <property type="match status" value="1"/>
</dbReference>
<dbReference type="Pfam" id="PF02752">
    <property type="entry name" value="Arrestin_C"/>
    <property type="match status" value="1"/>
</dbReference>
<dbReference type="Pfam" id="PF00339">
    <property type="entry name" value="Arrestin_N"/>
    <property type="match status" value="1"/>
</dbReference>
<dbReference type="SMART" id="SM01017">
    <property type="entry name" value="Arrestin_C"/>
    <property type="match status" value="1"/>
</dbReference>
<dbReference type="SUPFAM" id="SSF81296">
    <property type="entry name" value="E set domains"/>
    <property type="match status" value="1"/>
</dbReference>
<accession>A1CTF4</accession>
<keyword id="KW-1185">Reference proteome</keyword>
<keyword id="KW-0833">Ubl conjugation pathway</keyword>
<comment type="function">
    <text evidence="1">Component of the regulatory network controlling carbon source utilization through ubiquitination and deubiquitination involving creA, creB, creC, creD and acrB. May be involved in signaling by recognizing appropriately phosphorylated substrates via its arrestin domains and then recruit a HECT-type ubiquitin ligase such as hulA, leading to ubiquitination of the substrate, providing a link between ubiquitination and phosphorylation in protein regulation and stability (By similarity).</text>
</comment>
<comment type="subunit">
    <text evidence="1">Interacts with hulA.</text>
</comment>
<comment type="similarity">
    <text evidence="3">Belongs to the arrestin family.</text>
</comment>
<comment type="sequence caution" evidence="3">
    <conflict type="erroneous gene model prediction">
        <sequence resource="EMBL-CDS" id="EAW06591"/>
    </conflict>
</comment>
<reference key="1">
    <citation type="journal article" date="2008" name="PLoS Genet.">
        <title>Genomic islands in the pathogenic filamentous fungus Aspergillus fumigatus.</title>
        <authorList>
            <person name="Fedorova N.D."/>
            <person name="Khaldi N."/>
            <person name="Joardar V.S."/>
            <person name="Maiti R."/>
            <person name="Amedeo P."/>
            <person name="Anderson M.J."/>
            <person name="Crabtree J."/>
            <person name="Silva J.C."/>
            <person name="Badger J.H."/>
            <person name="Albarraq A."/>
            <person name="Angiuoli S."/>
            <person name="Bussey H."/>
            <person name="Bowyer P."/>
            <person name="Cotty P.J."/>
            <person name="Dyer P.S."/>
            <person name="Egan A."/>
            <person name="Galens K."/>
            <person name="Fraser-Liggett C.M."/>
            <person name="Haas B.J."/>
            <person name="Inman J.M."/>
            <person name="Kent R."/>
            <person name="Lemieux S."/>
            <person name="Malavazi I."/>
            <person name="Orvis J."/>
            <person name="Roemer T."/>
            <person name="Ronning C.M."/>
            <person name="Sundaram J.P."/>
            <person name="Sutton G."/>
            <person name="Turner G."/>
            <person name="Venter J.C."/>
            <person name="White O.R."/>
            <person name="Whitty B.R."/>
            <person name="Youngman P."/>
            <person name="Wolfe K.H."/>
            <person name="Goldman G.H."/>
            <person name="Wortman J.R."/>
            <person name="Jiang B."/>
            <person name="Denning D.W."/>
            <person name="Nierman W.C."/>
        </authorList>
    </citation>
    <scope>NUCLEOTIDE SEQUENCE [LARGE SCALE GENOMIC DNA]</scope>
    <source>
        <strain>ATCC 1007 / CBS 513.65 / DSM 816 / NCTC 3887 / NRRL 1 / QM 1276 / 107</strain>
    </source>
</reference>
<evidence type="ECO:0000250" key="1"/>
<evidence type="ECO:0000256" key="2">
    <source>
        <dbReference type="SAM" id="MobiDB-lite"/>
    </source>
</evidence>
<evidence type="ECO:0000305" key="3"/>
<name>CRED_ASPCL</name>
<gene>
    <name type="primary">creD</name>
    <name type="ORF">ACLA_082820</name>
</gene>